<accession>Q6GMD2</accession>
<keyword id="KW-0963">Cytoplasm</keyword>
<keyword id="KW-0539">Nucleus</keyword>
<keyword id="KW-1185">Reference proteome</keyword>
<keyword id="KW-0677">Repeat</keyword>
<keyword id="KW-0853">WD repeat</keyword>
<protein>
    <recommendedName>
        <fullName>Superkiller complex protein 8</fullName>
        <shortName>Ski8</shortName>
    </recommendedName>
    <alternativeName>
        <fullName>WD repeat-containing protein 61</fullName>
    </alternativeName>
</protein>
<evidence type="ECO:0000250" key="1">
    <source>
        <dbReference type="UniProtKB" id="Q9GZS3"/>
    </source>
</evidence>
<evidence type="ECO:0000305" key="2"/>
<dbReference type="EMBL" id="BC074136">
    <property type="protein sequence ID" value="AAH74136.1"/>
    <property type="molecule type" value="mRNA"/>
</dbReference>
<dbReference type="RefSeq" id="NP_001086055.1">
    <property type="nucleotide sequence ID" value="NM_001092586.1"/>
</dbReference>
<dbReference type="RefSeq" id="XP_018100565.1">
    <property type="nucleotide sequence ID" value="XM_018245076.1"/>
</dbReference>
<dbReference type="SMR" id="Q6GMD2"/>
<dbReference type="BioGRID" id="102647">
    <property type="interactions" value="1"/>
</dbReference>
<dbReference type="IntAct" id="Q6GMD2">
    <property type="interactions" value="1"/>
</dbReference>
<dbReference type="DNASU" id="444484"/>
<dbReference type="GeneID" id="444484"/>
<dbReference type="KEGG" id="xla:444484"/>
<dbReference type="AGR" id="Xenbase:XB-GENE-5751613"/>
<dbReference type="CTD" id="444484"/>
<dbReference type="Xenbase" id="XB-GENE-5751613">
    <property type="gene designation" value="skic8.L"/>
</dbReference>
<dbReference type="OMA" id="LDSSMCL"/>
<dbReference type="OrthoDB" id="17410at2759"/>
<dbReference type="Proteomes" id="UP000186698">
    <property type="component" value="Chromosome 2L"/>
</dbReference>
<dbReference type="Bgee" id="444484">
    <property type="expression patterns" value="Expressed in oocyte and 19 other cell types or tissues"/>
</dbReference>
<dbReference type="GO" id="GO:0016593">
    <property type="term" value="C:Cdc73/Paf1 complex"/>
    <property type="evidence" value="ECO:0000250"/>
    <property type="project" value="UniProtKB"/>
</dbReference>
<dbReference type="GO" id="GO:0005737">
    <property type="term" value="C:cytoplasm"/>
    <property type="evidence" value="ECO:0000250"/>
    <property type="project" value="UniProtKB"/>
</dbReference>
<dbReference type="GO" id="GO:0000791">
    <property type="term" value="C:euchromatin"/>
    <property type="evidence" value="ECO:0000250"/>
    <property type="project" value="UniProtKB"/>
</dbReference>
<dbReference type="GO" id="GO:0005634">
    <property type="term" value="C:nucleus"/>
    <property type="evidence" value="ECO:0000250"/>
    <property type="project" value="UniProtKB"/>
</dbReference>
<dbReference type="GO" id="GO:0055087">
    <property type="term" value="C:Ski complex"/>
    <property type="evidence" value="ECO:0000250"/>
    <property type="project" value="UniProtKB"/>
</dbReference>
<dbReference type="GO" id="GO:0045638">
    <property type="term" value="P:negative regulation of myeloid cell differentiation"/>
    <property type="evidence" value="ECO:0000250"/>
    <property type="project" value="UniProtKB"/>
</dbReference>
<dbReference type="GO" id="GO:0070478">
    <property type="term" value="P:nuclear-transcribed mRNA catabolic process, 3'-5' exonucleolytic nonsense-mediated decay"/>
    <property type="evidence" value="ECO:0000250"/>
    <property type="project" value="UniProtKB"/>
</dbReference>
<dbReference type="GO" id="GO:0072344">
    <property type="term" value="P:rescue of stalled ribosome"/>
    <property type="evidence" value="ECO:0000250"/>
    <property type="project" value="UniProtKB"/>
</dbReference>
<dbReference type="GO" id="GO:0006368">
    <property type="term" value="P:transcription elongation by RNA polymerase II"/>
    <property type="evidence" value="ECO:0000250"/>
    <property type="project" value="UniProtKB"/>
</dbReference>
<dbReference type="CDD" id="cd00200">
    <property type="entry name" value="WD40"/>
    <property type="match status" value="1"/>
</dbReference>
<dbReference type="FunFam" id="2.130.10.10:FF:000094">
    <property type="entry name" value="WD repeat-containing protein 61"/>
    <property type="match status" value="1"/>
</dbReference>
<dbReference type="Gene3D" id="2.130.10.10">
    <property type="entry name" value="YVTN repeat-like/Quinoprotein amine dehydrogenase"/>
    <property type="match status" value="1"/>
</dbReference>
<dbReference type="InterPro" id="IPR055442">
    <property type="entry name" value="Beta-prop_EML-like_2nd"/>
</dbReference>
<dbReference type="InterPro" id="IPR020472">
    <property type="entry name" value="G-protein_beta_WD-40_rep"/>
</dbReference>
<dbReference type="InterPro" id="IPR051510">
    <property type="entry name" value="SKI8"/>
</dbReference>
<dbReference type="InterPro" id="IPR015943">
    <property type="entry name" value="WD40/YVTN_repeat-like_dom_sf"/>
</dbReference>
<dbReference type="InterPro" id="IPR019775">
    <property type="entry name" value="WD40_repeat_CS"/>
</dbReference>
<dbReference type="InterPro" id="IPR036322">
    <property type="entry name" value="WD40_repeat_dom_sf"/>
</dbReference>
<dbReference type="InterPro" id="IPR001680">
    <property type="entry name" value="WD40_rpt"/>
</dbReference>
<dbReference type="PANTHER" id="PTHR44090:SF1">
    <property type="entry name" value="SUPERKILLER COMPLEX PROTEIN 8"/>
    <property type="match status" value="1"/>
</dbReference>
<dbReference type="PANTHER" id="PTHR44090">
    <property type="entry name" value="WD REPEAT-CONTAINING PROTEIN 61"/>
    <property type="match status" value="1"/>
</dbReference>
<dbReference type="Pfam" id="PF23414">
    <property type="entry name" value="Beta-prop_EML_2"/>
    <property type="match status" value="1"/>
</dbReference>
<dbReference type="Pfam" id="PF00400">
    <property type="entry name" value="WD40"/>
    <property type="match status" value="3"/>
</dbReference>
<dbReference type="PRINTS" id="PR00320">
    <property type="entry name" value="GPROTEINBRPT"/>
</dbReference>
<dbReference type="SMART" id="SM00320">
    <property type="entry name" value="WD40"/>
    <property type="match status" value="7"/>
</dbReference>
<dbReference type="SUPFAM" id="SSF50978">
    <property type="entry name" value="WD40 repeat-like"/>
    <property type="match status" value="1"/>
</dbReference>
<dbReference type="PROSITE" id="PS00678">
    <property type="entry name" value="WD_REPEATS_1"/>
    <property type="match status" value="1"/>
</dbReference>
<dbReference type="PROSITE" id="PS50082">
    <property type="entry name" value="WD_REPEATS_2"/>
    <property type="match status" value="6"/>
</dbReference>
<dbReference type="PROSITE" id="PS50294">
    <property type="entry name" value="WD_REPEATS_REGION"/>
    <property type="match status" value="1"/>
</dbReference>
<organism>
    <name type="scientific">Xenopus laevis</name>
    <name type="common">African clawed frog</name>
    <dbReference type="NCBI Taxonomy" id="8355"/>
    <lineage>
        <taxon>Eukaryota</taxon>
        <taxon>Metazoa</taxon>
        <taxon>Chordata</taxon>
        <taxon>Craniata</taxon>
        <taxon>Vertebrata</taxon>
        <taxon>Euteleostomi</taxon>
        <taxon>Amphibia</taxon>
        <taxon>Batrachia</taxon>
        <taxon>Anura</taxon>
        <taxon>Pipoidea</taxon>
        <taxon>Pipidae</taxon>
        <taxon>Xenopodinae</taxon>
        <taxon>Xenopus</taxon>
        <taxon>Xenopus</taxon>
    </lineage>
</organism>
<gene>
    <name type="primary">skic8</name>
    <name type="synonym">wdr61</name>
</gene>
<sequence length="305" mass="33334">MSTQYSILFKQEHAHEDAIWSVGWGKNSNDGSELVISGSLDDLVKVWKWSDERLEMQWALEGHQLGVVSVDVSPSGNIMASSSLDAHIRLWDLESGKQIRSIDAGPVDAWSVAFSPDSQHLATGSHVGKVNIFGVETGKKEYSLDTRGKFILSIAYSPDGKYLASGAIDGIINIFDIATGKLLHTLEGHAMPIRSLTFSTDSQLLVTASDDGYIKIYDVQHASLAATLSGHGSWVLNVAFSPDDAHFVSSSSDKSVKVWDVSARTCVHTFLDHQDQVWGVKYNRNGSKIVSVGDDQEIHVYDCPI</sequence>
<feature type="chain" id="PRO_0000245856" description="Superkiller complex protein 8">
    <location>
        <begin position="1"/>
        <end position="305"/>
    </location>
</feature>
<feature type="repeat" description="WD 1">
    <location>
        <begin position="14"/>
        <end position="57"/>
    </location>
</feature>
<feature type="repeat" description="WD 2">
    <location>
        <begin position="62"/>
        <end position="101"/>
    </location>
</feature>
<feature type="repeat" description="WD 3">
    <location>
        <begin position="104"/>
        <end position="143"/>
    </location>
</feature>
<feature type="repeat" description="WD 4">
    <location>
        <begin position="146"/>
        <end position="187"/>
    </location>
</feature>
<feature type="repeat" description="WD 5">
    <location>
        <begin position="188"/>
        <end position="227"/>
    </location>
</feature>
<feature type="repeat" description="WD 6">
    <location>
        <begin position="230"/>
        <end position="269"/>
    </location>
</feature>
<feature type="repeat" description="WD 7">
    <location>
        <begin position="272"/>
        <end position="305"/>
    </location>
</feature>
<name>SKI8_XENLA</name>
<comment type="function">
    <text evidence="1">Component of the PAF1 complex (PAF1C) which has multiple functions during transcription by RNA polymerase II and is implicated in regulation of development and maintenance of embryonic stem cell pluripotency. PAF1C associates with RNA polymerase II through interaction with POLR2A CTD non-phosphorylated and 'Ser-2'- and 'Ser-5'-phosphorylated forms and is involved in transcriptional elongation, acting both independently and synergistically with TCEA1 and in cooperation with the DSIF complex and HTATSF1. Also acts as a component of the SKI complex, a multiprotein complex that assists the RNA-degrading exosome during the mRNA decay and quality-control pathways. The SKI complex catalyzes mRNA extraction from 80S ribosomal complexes in the 3'-5' direction and channels mRNA to the cytosolic exosome for degradation.</text>
</comment>
<comment type="subunit">
    <text evidence="1">Component of the PAF1 complex (By similarity). Component of the SKI complex (By similarity).</text>
</comment>
<comment type="subcellular location">
    <subcellularLocation>
        <location evidence="1">Nucleus</location>
    </subcellularLocation>
    <subcellularLocation>
        <location evidence="1">Cytoplasm</location>
    </subcellularLocation>
</comment>
<comment type="similarity">
    <text evidence="2">Belongs to the SKI8 family.</text>
</comment>
<reference key="1">
    <citation type="submission" date="2004-06" db="EMBL/GenBank/DDBJ databases">
        <authorList>
            <consortium name="NIH - Xenopus Gene Collection (XGC) project"/>
        </authorList>
    </citation>
    <scope>NUCLEOTIDE SEQUENCE [LARGE SCALE MRNA]</scope>
    <source>
        <tissue>Kidney</tissue>
    </source>
</reference>
<proteinExistence type="evidence at transcript level"/>